<comment type="function">
    <text evidence="1">Component of ribonuclease P, a ribonucleoprotein complex that generates mature tRNA molecules by cleaving their 5'-ends. Also a component of the MRP ribonuclease complex, which cleaves pre-rRNA sequences.</text>
</comment>
<comment type="subunit">
    <text evidence="1">Component of nuclear RNase P and RNase MRP ribonucleoproteins. RNase P consists of a catalytic RNA moiety and about 10 protein subunits; POP1, POP4, POP5, POP7, RPP14, RPP21, RPP25, RPP30, RPP38 and RPP40. Within the RNase P complex, POP1, POP7 and RPP25 form the 'finger' subcomplex, POP5, RPP14, RPP40 and homodimeric RPP30 form the 'palm' subcomplex, and RPP21, POP4 and RPP38 form the 'wrist' subcomplex. All subunits of the RNase P complex interact with the catalytic RNA. Several subunits of RNase P are also part of the RNase MRP complex. RNase MRP consists of a catalytic RNA moiety and about 8 protein subunits; POP1, POP7, RPP25, RPP30, RPP38, RPP40 and possibly also POP4 and POP5.</text>
</comment>
<comment type="subcellular location">
    <subcellularLocation>
        <location evidence="2">Nucleus</location>
        <location evidence="2">Nucleolus</location>
    </subcellularLocation>
</comment>
<comment type="sequence caution" evidence="2">
    <conflict type="erroneous initiation">
        <sequence resource="EMBL-CDS" id="AAH24607"/>
    </conflict>
</comment>
<comment type="sequence caution" evidence="2">
    <conflict type="erroneous initiation">
        <sequence resource="EMBL-CDS" id="BAC33465"/>
    </conflict>
</comment>
<comment type="sequence caution" evidence="2">
    <conflict type="erroneous initiation">
        <sequence resource="EMBL-CDS" id="EDL40907"/>
    </conflict>
</comment>
<protein>
    <recommendedName>
        <fullName>Ribonuclease P protein subunit p40</fullName>
        <shortName>RNaseP protein p40</shortName>
    </recommendedName>
</protein>
<organism>
    <name type="scientific">Mus musculus</name>
    <name type="common">Mouse</name>
    <dbReference type="NCBI Taxonomy" id="10090"/>
    <lineage>
        <taxon>Eukaryota</taxon>
        <taxon>Metazoa</taxon>
        <taxon>Chordata</taxon>
        <taxon>Craniata</taxon>
        <taxon>Vertebrata</taxon>
        <taxon>Euteleostomi</taxon>
        <taxon>Mammalia</taxon>
        <taxon>Eutheria</taxon>
        <taxon>Euarchontoglires</taxon>
        <taxon>Glires</taxon>
        <taxon>Rodentia</taxon>
        <taxon>Myomorpha</taxon>
        <taxon>Muroidea</taxon>
        <taxon>Muridae</taxon>
        <taxon>Murinae</taxon>
        <taxon>Mus</taxon>
        <taxon>Mus</taxon>
    </lineage>
</organism>
<feature type="chain" id="PRO_0000354076" description="Ribonuclease P protein subunit p40">
    <location>
        <begin position="1"/>
        <end position="363"/>
    </location>
</feature>
<feature type="sequence conflict" description="In Ref. 1; BAC33465." evidence="2" ref="1">
    <original>H</original>
    <variation>Y</variation>
    <location>
        <position position="75"/>
    </location>
</feature>
<dbReference type="EMBL" id="AK048810">
    <property type="protein sequence ID" value="BAC33465.1"/>
    <property type="status" value="ALT_INIT"/>
    <property type="molecule type" value="mRNA"/>
</dbReference>
<dbReference type="EMBL" id="CH466546">
    <property type="protein sequence ID" value="EDL40907.1"/>
    <property type="status" value="ALT_INIT"/>
    <property type="molecule type" value="Genomic_DNA"/>
</dbReference>
<dbReference type="EMBL" id="BC024607">
    <property type="protein sequence ID" value="AAH24607.1"/>
    <property type="status" value="ALT_INIT"/>
    <property type="molecule type" value="mRNA"/>
</dbReference>
<dbReference type="CCDS" id="CCDS26451.2"/>
<dbReference type="RefSeq" id="NP_666050.3">
    <property type="nucleotide sequence ID" value="NM_145938.4"/>
</dbReference>
<dbReference type="RefSeq" id="XP_011242604.1">
    <property type="nucleotide sequence ID" value="XM_011244302.1"/>
</dbReference>
<dbReference type="SMR" id="Q8R1F9"/>
<dbReference type="BioGRID" id="228975">
    <property type="interactions" value="1"/>
</dbReference>
<dbReference type="FunCoup" id="Q8R1F9">
    <property type="interactions" value="206"/>
</dbReference>
<dbReference type="STRING" id="10090.ENSMUSP00000130290"/>
<dbReference type="iPTMnet" id="Q8R1F9"/>
<dbReference type="PhosphoSitePlus" id="Q8R1F9"/>
<dbReference type="PaxDb" id="10090-ENSMUSP00000130290"/>
<dbReference type="ProteomicsDB" id="262705"/>
<dbReference type="Pumba" id="Q8R1F9"/>
<dbReference type="Antibodypedia" id="24532">
    <property type="antibodies" value="81 antibodies from 21 providers"/>
</dbReference>
<dbReference type="DNASU" id="208366"/>
<dbReference type="Ensembl" id="ENSMUST00000171686.9">
    <property type="protein sequence ID" value="ENSMUSP00000130290.3"/>
    <property type="gene ID" value="ENSMUSG00000021418.16"/>
</dbReference>
<dbReference type="GeneID" id="208366"/>
<dbReference type="KEGG" id="mmu:208366"/>
<dbReference type="UCSC" id="uc011yyj.1">
    <property type="organism name" value="mouse"/>
</dbReference>
<dbReference type="AGR" id="MGI:1346084"/>
<dbReference type="CTD" id="10799"/>
<dbReference type="MGI" id="MGI:1346084">
    <property type="gene designation" value="Rpp40"/>
</dbReference>
<dbReference type="VEuPathDB" id="HostDB:ENSMUSG00000021418"/>
<dbReference type="eggNOG" id="ENOG502QSAV">
    <property type="taxonomic scope" value="Eukaryota"/>
</dbReference>
<dbReference type="GeneTree" id="ENSGT00390000014167"/>
<dbReference type="HOGENOM" id="CLU_065211_0_0_1"/>
<dbReference type="InParanoid" id="Q8R1F9"/>
<dbReference type="OMA" id="HAYNCRV"/>
<dbReference type="OrthoDB" id="63112at2759"/>
<dbReference type="PhylomeDB" id="Q8R1F9"/>
<dbReference type="TreeFam" id="TF330967"/>
<dbReference type="Reactome" id="R-MMU-6791226">
    <property type="pathway name" value="Major pathway of rRNA processing in the nucleolus and cytosol"/>
</dbReference>
<dbReference type="BioGRID-ORCS" id="208366">
    <property type="hits" value="24 hits in 77 CRISPR screens"/>
</dbReference>
<dbReference type="PRO" id="PR:Q8R1F9"/>
<dbReference type="Proteomes" id="UP000000589">
    <property type="component" value="Chromosome 13"/>
</dbReference>
<dbReference type="RNAct" id="Q8R1F9">
    <property type="molecule type" value="protein"/>
</dbReference>
<dbReference type="Bgee" id="ENSMUSG00000021418">
    <property type="expression patterns" value="Expressed in blastoderm cell in morula and 199 other cell types or tissues"/>
</dbReference>
<dbReference type="ExpressionAtlas" id="Q8R1F9">
    <property type="expression patterns" value="baseline and differential"/>
</dbReference>
<dbReference type="GO" id="GO:0030681">
    <property type="term" value="C:multimeric ribonuclease P complex"/>
    <property type="evidence" value="ECO:0000250"/>
    <property type="project" value="UniProtKB"/>
</dbReference>
<dbReference type="GO" id="GO:0005655">
    <property type="term" value="C:nucleolar ribonuclease P complex"/>
    <property type="evidence" value="ECO:0000266"/>
    <property type="project" value="MGI"/>
</dbReference>
<dbReference type="GO" id="GO:0004526">
    <property type="term" value="F:ribonuclease P activity"/>
    <property type="evidence" value="ECO:0000266"/>
    <property type="project" value="MGI"/>
</dbReference>
<dbReference type="GO" id="GO:0033204">
    <property type="term" value="F:ribonuclease P RNA binding"/>
    <property type="evidence" value="ECO:0000250"/>
    <property type="project" value="UniProtKB"/>
</dbReference>
<dbReference type="GO" id="GO:0006364">
    <property type="term" value="P:rRNA processing"/>
    <property type="evidence" value="ECO:0007669"/>
    <property type="project" value="UniProtKB-KW"/>
</dbReference>
<dbReference type="GO" id="GO:0001682">
    <property type="term" value="P:tRNA 5'-leader removal"/>
    <property type="evidence" value="ECO:0000250"/>
    <property type="project" value="UniProtKB"/>
</dbReference>
<dbReference type="InterPro" id="IPR013893">
    <property type="entry name" value="RNase_P_Rpp40"/>
</dbReference>
<dbReference type="PANTHER" id="PTHR15396">
    <property type="entry name" value="RIBONUCLEASE P PROTEIN SUBUNIT P40"/>
    <property type="match status" value="1"/>
</dbReference>
<dbReference type="PANTHER" id="PTHR15396:SF1">
    <property type="entry name" value="RIBONUCLEASE P PROTEIN SUBUNIT P40"/>
    <property type="match status" value="1"/>
</dbReference>
<dbReference type="Pfam" id="PF08584">
    <property type="entry name" value="Ribonuc_P_40"/>
    <property type="match status" value="1"/>
</dbReference>
<reference key="1">
    <citation type="journal article" date="2005" name="Science">
        <title>The transcriptional landscape of the mammalian genome.</title>
        <authorList>
            <person name="Carninci P."/>
            <person name="Kasukawa T."/>
            <person name="Katayama S."/>
            <person name="Gough J."/>
            <person name="Frith M.C."/>
            <person name="Maeda N."/>
            <person name="Oyama R."/>
            <person name="Ravasi T."/>
            <person name="Lenhard B."/>
            <person name="Wells C."/>
            <person name="Kodzius R."/>
            <person name="Shimokawa K."/>
            <person name="Bajic V.B."/>
            <person name="Brenner S.E."/>
            <person name="Batalov S."/>
            <person name="Forrest A.R."/>
            <person name="Zavolan M."/>
            <person name="Davis M.J."/>
            <person name="Wilming L.G."/>
            <person name="Aidinis V."/>
            <person name="Allen J.E."/>
            <person name="Ambesi-Impiombato A."/>
            <person name="Apweiler R."/>
            <person name="Aturaliya R.N."/>
            <person name="Bailey T.L."/>
            <person name="Bansal M."/>
            <person name="Baxter L."/>
            <person name="Beisel K.W."/>
            <person name="Bersano T."/>
            <person name="Bono H."/>
            <person name="Chalk A.M."/>
            <person name="Chiu K.P."/>
            <person name="Choudhary V."/>
            <person name="Christoffels A."/>
            <person name="Clutterbuck D.R."/>
            <person name="Crowe M.L."/>
            <person name="Dalla E."/>
            <person name="Dalrymple B.P."/>
            <person name="de Bono B."/>
            <person name="Della Gatta G."/>
            <person name="di Bernardo D."/>
            <person name="Down T."/>
            <person name="Engstrom P."/>
            <person name="Fagiolini M."/>
            <person name="Faulkner G."/>
            <person name="Fletcher C.F."/>
            <person name="Fukushima T."/>
            <person name="Furuno M."/>
            <person name="Futaki S."/>
            <person name="Gariboldi M."/>
            <person name="Georgii-Hemming P."/>
            <person name="Gingeras T.R."/>
            <person name="Gojobori T."/>
            <person name="Green R.E."/>
            <person name="Gustincich S."/>
            <person name="Harbers M."/>
            <person name="Hayashi Y."/>
            <person name="Hensch T.K."/>
            <person name="Hirokawa N."/>
            <person name="Hill D."/>
            <person name="Huminiecki L."/>
            <person name="Iacono M."/>
            <person name="Ikeo K."/>
            <person name="Iwama A."/>
            <person name="Ishikawa T."/>
            <person name="Jakt M."/>
            <person name="Kanapin A."/>
            <person name="Katoh M."/>
            <person name="Kawasawa Y."/>
            <person name="Kelso J."/>
            <person name="Kitamura H."/>
            <person name="Kitano H."/>
            <person name="Kollias G."/>
            <person name="Krishnan S.P."/>
            <person name="Kruger A."/>
            <person name="Kummerfeld S.K."/>
            <person name="Kurochkin I.V."/>
            <person name="Lareau L.F."/>
            <person name="Lazarevic D."/>
            <person name="Lipovich L."/>
            <person name="Liu J."/>
            <person name="Liuni S."/>
            <person name="McWilliam S."/>
            <person name="Madan Babu M."/>
            <person name="Madera M."/>
            <person name="Marchionni L."/>
            <person name="Matsuda H."/>
            <person name="Matsuzawa S."/>
            <person name="Miki H."/>
            <person name="Mignone F."/>
            <person name="Miyake S."/>
            <person name="Morris K."/>
            <person name="Mottagui-Tabar S."/>
            <person name="Mulder N."/>
            <person name="Nakano N."/>
            <person name="Nakauchi H."/>
            <person name="Ng P."/>
            <person name="Nilsson R."/>
            <person name="Nishiguchi S."/>
            <person name="Nishikawa S."/>
            <person name="Nori F."/>
            <person name="Ohara O."/>
            <person name="Okazaki Y."/>
            <person name="Orlando V."/>
            <person name="Pang K.C."/>
            <person name="Pavan W.J."/>
            <person name="Pavesi G."/>
            <person name="Pesole G."/>
            <person name="Petrovsky N."/>
            <person name="Piazza S."/>
            <person name="Reed J."/>
            <person name="Reid J.F."/>
            <person name="Ring B.Z."/>
            <person name="Ringwald M."/>
            <person name="Rost B."/>
            <person name="Ruan Y."/>
            <person name="Salzberg S.L."/>
            <person name="Sandelin A."/>
            <person name="Schneider C."/>
            <person name="Schoenbach C."/>
            <person name="Sekiguchi K."/>
            <person name="Semple C.A."/>
            <person name="Seno S."/>
            <person name="Sessa L."/>
            <person name="Sheng Y."/>
            <person name="Shibata Y."/>
            <person name="Shimada H."/>
            <person name="Shimada K."/>
            <person name="Silva D."/>
            <person name="Sinclair B."/>
            <person name="Sperling S."/>
            <person name="Stupka E."/>
            <person name="Sugiura K."/>
            <person name="Sultana R."/>
            <person name="Takenaka Y."/>
            <person name="Taki K."/>
            <person name="Tammoja K."/>
            <person name="Tan S.L."/>
            <person name="Tang S."/>
            <person name="Taylor M.S."/>
            <person name="Tegner J."/>
            <person name="Teichmann S.A."/>
            <person name="Ueda H.R."/>
            <person name="van Nimwegen E."/>
            <person name="Verardo R."/>
            <person name="Wei C.L."/>
            <person name="Yagi K."/>
            <person name="Yamanishi H."/>
            <person name="Zabarovsky E."/>
            <person name="Zhu S."/>
            <person name="Zimmer A."/>
            <person name="Hide W."/>
            <person name="Bult C."/>
            <person name="Grimmond S.M."/>
            <person name="Teasdale R.D."/>
            <person name="Liu E.T."/>
            <person name="Brusic V."/>
            <person name="Quackenbush J."/>
            <person name="Wahlestedt C."/>
            <person name="Mattick J.S."/>
            <person name="Hume D.A."/>
            <person name="Kai C."/>
            <person name="Sasaki D."/>
            <person name="Tomaru Y."/>
            <person name="Fukuda S."/>
            <person name="Kanamori-Katayama M."/>
            <person name="Suzuki M."/>
            <person name="Aoki J."/>
            <person name="Arakawa T."/>
            <person name="Iida J."/>
            <person name="Imamura K."/>
            <person name="Itoh M."/>
            <person name="Kato T."/>
            <person name="Kawaji H."/>
            <person name="Kawagashira N."/>
            <person name="Kawashima T."/>
            <person name="Kojima M."/>
            <person name="Kondo S."/>
            <person name="Konno H."/>
            <person name="Nakano K."/>
            <person name="Ninomiya N."/>
            <person name="Nishio T."/>
            <person name="Okada M."/>
            <person name="Plessy C."/>
            <person name="Shibata K."/>
            <person name="Shiraki T."/>
            <person name="Suzuki S."/>
            <person name="Tagami M."/>
            <person name="Waki K."/>
            <person name="Watahiki A."/>
            <person name="Okamura-Oho Y."/>
            <person name="Suzuki H."/>
            <person name="Kawai J."/>
            <person name="Hayashizaki Y."/>
        </authorList>
    </citation>
    <scope>NUCLEOTIDE SEQUENCE [LARGE SCALE MRNA]</scope>
    <source>
        <strain>C57BL/6J</strain>
        <tissue>Cerebellum</tissue>
    </source>
</reference>
<reference key="2">
    <citation type="submission" date="2005-07" db="EMBL/GenBank/DDBJ databases">
        <authorList>
            <person name="Mural R.J."/>
            <person name="Adams M.D."/>
            <person name="Myers E.W."/>
            <person name="Smith H.O."/>
            <person name="Venter J.C."/>
        </authorList>
    </citation>
    <scope>NUCLEOTIDE SEQUENCE [LARGE SCALE GENOMIC DNA]</scope>
</reference>
<reference key="3">
    <citation type="journal article" date="2004" name="Genome Res.">
        <title>The status, quality, and expansion of the NIH full-length cDNA project: the Mammalian Gene Collection (MGC).</title>
        <authorList>
            <consortium name="The MGC Project Team"/>
        </authorList>
    </citation>
    <scope>NUCLEOTIDE SEQUENCE [LARGE SCALE MRNA] OF 13-363</scope>
    <source>
        <strain>FVB/N</strain>
        <tissue>Kidney</tissue>
    </source>
</reference>
<keyword id="KW-0539">Nucleus</keyword>
<keyword id="KW-1185">Reference proteome</keyword>
<keyword id="KW-0698">rRNA processing</keyword>
<keyword id="KW-0819">tRNA processing</keyword>
<evidence type="ECO:0000250" key="1">
    <source>
        <dbReference type="UniProtKB" id="O75818"/>
    </source>
</evidence>
<evidence type="ECO:0000305" key="2"/>
<accession>Q8R1F9</accession>
<accession>Q8BX66</accession>
<proteinExistence type="evidence at transcript level"/>
<name>RPP40_MOUSE</name>
<gene>
    <name type="primary">Rpp40</name>
</gene>
<sequence>MATLRRLQEAPRHLLVCEKSNFGHDKSRHKHLVETHYHNYRVSFLIPECGLLSKELKSLVMDIGPYYSVKNLPLHELITHEFINTFVKKGSFSALTYNTSIDEDNTVALLPNGKLILSLDKDTYEETGLQGRPSRYSGRKSMKFVISIDLMDLSLNLDSKKYRRISWSFKEKKPLKFDFLLAWHPTGTEESTMMSYFSKYQIQEHQPKVALSTVRELQCPVLRSSGLAGEPEEACSALEFFDWLGAVFCSADLNNEPYNFISTYCCPQPSAVVAQAFLCTITGFILPEKIHVLLEQLCHYFDEPKLAPWVTLTVQGFADSPVAWREKEHGFHKGGEHLYNFVVFNNQDYWLQMAVGANDDCPP</sequence>